<feature type="initiator methionine" description="Removed" evidence="2">
    <location>
        <position position="1"/>
    </location>
</feature>
<feature type="chain" id="PRO_0000326430" description="Elongation factor 1-delta">
    <location>
        <begin position="2"/>
        <end position="280"/>
    </location>
</feature>
<feature type="region of interest" description="Disordered" evidence="5">
    <location>
        <begin position="113"/>
        <end position="171"/>
    </location>
</feature>
<feature type="compositionally biased region" description="Acidic residues" evidence="5">
    <location>
        <begin position="149"/>
        <end position="168"/>
    </location>
</feature>
<feature type="modified residue" description="N-acetylalanine" evidence="2">
    <location>
        <position position="2"/>
    </location>
</feature>
<feature type="modified residue" description="N6-acetyllysine" evidence="2">
    <location>
        <position position="17"/>
    </location>
</feature>
<feature type="modified residue" description="Phosphoserine" evidence="2">
    <location>
        <position position="37"/>
    </location>
</feature>
<feature type="modified residue" description="Phosphoserine" evidence="2">
    <location>
        <position position="44"/>
    </location>
</feature>
<feature type="modified residue" description="Phosphoserine" evidence="2">
    <location>
        <position position="60"/>
    </location>
</feature>
<feature type="modified residue" description="Phosphoserine" evidence="2">
    <location>
        <position position="86"/>
    </location>
</feature>
<feature type="modified residue" description="Phosphoserine" evidence="4">
    <location>
        <position position="106"/>
    </location>
</feature>
<feature type="modified residue" description="N6-acetyllysine" evidence="2">
    <location>
        <position position="107"/>
    </location>
</feature>
<feature type="modified residue" description="N6-acetyllysine; alternate" evidence="2">
    <location>
        <position position="117"/>
    </location>
</feature>
<feature type="modified residue" description="N6-succinyllysine; alternate" evidence="3">
    <location>
        <position position="117"/>
    </location>
</feature>
<feature type="modified residue" description="Phosphoserine" evidence="2">
    <location>
        <position position="119"/>
    </location>
</feature>
<feature type="modified residue" description="Phosphothreonine" evidence="2">
    <location>
        <position position="129"/>
    </location>
</feature>
<feature type="modified residue" description="Phosphoserine" evidence="2">
    <location>
        <position position="133"/>
    </location>
</feature>
<feature type="modified residue" description="Phosphothreonine" evidence="2">
    <location>
        <position position="147"/>
    </location>
</feature>
<feature type="modified residue" description="Phosphoserine; by CK2" evidence="2">
    <location>
        <position position="162"/>
    </location>
</feature>
<organism>
    <name type="scientific">Bos taurus</name>
    <name type="common">Bovine</name>
    <dbReference type="NCBI Taxonomy" id="9913"/>
    <lineage>
        <taxon>Eukaryota</taxon>
        <taxon>Metazoa</taxon>
        <taxon>Chordata</taxon>
        <taxon>Craniata</taxon>
        <taxon>Vertebrata</taxon>
        <taxon>Euteleostomi</taxon>
        <taxon>Mammalia</taxon>
        <taxon>Eutheria</taxon>
        <taxon>Laurasiatheria</taxon>
        <taxon>Artiodactyla</taxon>
        <taxon>Ruminantia</taxon>
        <taxon>Pecora</taxon>
        <taxon>Bovidae</taxon>
        <taxon>Bovinae</taxon>
        <taxon>Bos</taxon>
    </lineage>
</organism>
<reference key="1">
    <citation type="journal article" date="2005" name="BMC Genomics">
        <title>Characterization of 954 bovine full-CDS cDNA sequences.</title>
        <authorList>
            <person name="Harhay G.P."/>
            <person name="Sonstegard T.S."/>
            <person name="Keele J.W."/>
            <person name="Heaton M.P."/>
            <person name="Clawson M.L."/>
            <person name="Snelling W.M."/>
            <person name="Wiedmann R.T."/>
            <person name="Van Tassell C.P."/>
            <person name="Smith T.P.L."/>
        </authorList>
    </citation>
    <scope>NUCLEOTIDE SEQUENCE [LARGE SCALE MRNA]</scope>
</reference>
<protein>
    <recommendedName>
        <fullName>Elongation factor 1-delta</fullName>
        <shortName>EF-1-delta</shortName>
    </recommendedName>
</protein>
<name>EF1D_BOVIN</name>
<accession>A5D989</accession>
<proteinExistence type="evidence at transcript level"/>
<comment type="function">
    <text evidence="1">EF-1-beta and EF-1-delta stimulate the exchange of GDP bound to EF-1-alpha to GTP.</text>
</comment>
<comment type="subunit">
    <text evidence="1">EF-1 is composed of 4 subunits: alpha, beta, delta, and gamma.</text>
</comment>
<comment type="similarity">
    <text evidence="6">Belongs to the EF-1-beta/EF-1-delta family.</text>
</comment>
<comment type="sequence caution" evidence="6">
    <conflict type="erroneous initiation">
        <sequence resource="EMBL-CDS" id="ABQ12948"/>
    </conflict>
</comment>
<evidence type="ECO:0000250" key="1"/>
<evidence type="ECO:0000250" key="2">
    <source>
        <dbReference type="UniProtKB" id="P29692"/>
    </source>
</evidence>
<evidence type="ECO:0000250" key="3">
    <source>
        <dbReference type="UniProtKB" id="P57776"/>
    </source>
</evidence>
<evidence type="ECO:0000250" key="4">
    <source>
        <dbReference type="UniProtKB" id="Q68FR9"/>
    </source>
</evidence>
<evidence type="ECO:0000256" key="5">
    <source>
        <dbReference type="SAM" id="MobiDB-lite"/>
    </source>
</evidence>
<evidence type="ECO:0000305" key="6"/>
<dbReference type="EMBL" id="BT030508">
    <property type="protein sequence ID" value="ABQ12948.1"/>
    <property type="status" value="ALT_INIT"/>
    <property type="molecule type" value="mRNA"/>
</dbReference>
<dbReference type="RefSeq" id="NP_001193549.1">
    <property type="nucleotide sequence ID" value="NM_001206620.2"/>
</dbReference>
<dbReference type="SMR" id="A5D989"/>
<dbReference type="FunCoup" id="A5D989">
    <property type="interactions" value="50"/>
</dbReference>
<dbReference type="STRING" id="9913.ENSBTAP00000019499"/>
<dbReference type="PaxDb" id="9913-ENSBTAP00000019499"/>
<dbReference type="PeptideAtlas" id="A5D989"/>
<dbReference type="GeneID" id="516473"/>
<dbReference type="KEGG" id="bta:516473"/>
<dbReference type="CTD" id="1936"/>
<dbReference type="eggNOG" id="KOG1668">
    <property type="taxonomic scope" value="Eukaryota"/>
</dbReference>
<dbReference type="HOGENOM" id="CLU_050172_1_0_1"/>
<dbReference type="InParanoid" id="A5D989"/>
<dbReference type="OrthoDB" id="331763at2759"/>
<dbReference type="TreeFam" id="TF313134"/>
<dbReference type="Proteomes" id="UP000009136">
    <property type="component" value="Unplaced"/>
</dbReference>
<dbReference type="GO" id="GO:0005829">
    <property type="term" value="C:cytosol"/>
    <property type="evidence" value="ECO:0000318"/>
    <property type="project" value="GO_Central"/>
</dbReference>
<dbReference type="GO" id="GO:0005853">
    <property type="term" value="C:eukaryotic translation elongation factor 1 complex"/>
    <property type="evidence" value="ECO:0007669"/>
    <property type="project" value="InterPro"/>
</dbReference>
<dbReference type="GO" id="GO:0005085">
    <property type="term" value="F:guanyl-nucleotide exchange factor activity"/>
    <property type="evidence" value="ECO:0000318"/>
    <property type="project" value="GO_Central"/>
</dbReference>
<dbReference type="GO" id="GO:0003746">
    <property type="term" value="F:translation elongation factor activity"/>
    <property type="evidence" value="ECO:0007669"/>
    <property type="project" value="UniProtKB-KW"/>
</dbReference>
<dbReference type="GO" id="GO:0006414">
    <property type="term" value="P:translational elongation"/>
    <property type="evidence" value="ECO:0000318"/>
    <property type="project" value="GO_Central"/>
</dbReference>
<dbReference type="CDD" id="cd00292">
    <property type="entry name" value="EF1B"/>
    <property type="match status" value="1"/>
</dbReference>
<dbReference type="FunFam" id="3.30.70.60:FF:000001">
    <property type="entry name" value="Elongation factor 1-beta 1 like"/>
    <property type="match status" value="1"/>
</dbReference>
<dbReference type="Gene3D" id="3.30.70.60">
    <property type="match status" value="1"/>
</dbReference>
<dbReference type="InterPro" id="IPR036219">
    <property type="entry name" value="eEF-1beta-like_sf"/>
</dbReference>
<dbReference type="InterPro" id="IPR018940">
    <property type="entry name" value="EF-1_beta_acid_region_euk"/>
</dbReference>
<dbReference type="InterPro" id="IPR049720">
    <property type="entry name" value="EF1B_bsu/dsu"/>
</dbReference>
<dbReference type="InterPro" id="IPR014038">
    <property type="entry name" value="EF1B_bsu/dsu_GNE"/>
</dbReference>
<dbReference type="InterPro" id="IPR014717">
    <property type="entry name" value="Transl_elong_EF1B/ribsomal_bS6"/>
</dbReference>
<dbReference type="InterPro" id="IPR001326">
    <property type="entry name" value="Transl_elong_EF1B_B/D_CS"/>
</dbReference>
<dbReference type="PANTHER" id="PTHR11595">
    <property type="entry name" value="EF-HAND AND COILED-COIL DOMAIN-CONTAINING FAMILY MEMBER"/>
    <property type="match status" value="1"/>
</dbReference>
<dbReference type="PANTHER" id="PTHR11595:SF26">
    <property type="entry name" value="ELONGATION FACTOR 1-DELTA"/>
    <property type="match status" value="1"/>
</dbReference>
<dbReference type="Pfam" id="PF10587">
    <property type="entry name" value="EF-1_beta_acid"/>
    <property type="match status" value="1"/>
</dbReference>
<dbReference type="Pfam" id="PF00736">
    <property type="entry name" value="EF1_GNE"/>
    <property type="match status" value="1"/>
</dbReference>
<dbReference type="SMART" id="SM01182">
    <property type="entry name" value="EF-1_beta_acid"/>
    <property type="match status" value="1"/>
</dbReference>
<dbReference type="SMART" id="SM00888">
    <property type="entry name" value="EF1_GNE"/>
    <property type="match status" value="1"/>
</dbReference>
<dbReference type="SUPFAM" id="SSF54984">
    <property type="entry name" value="eEF-1beta-like"/>
    <property type="match status" value="1"/>
</dbReference>
<dbReference type="PROSITE" id="PS00824">
    <property type="entry name" value="EF1BD_1"/>
    <property type="match status" value="1"/>
</dbReference>
<dbReference type="PROSITE" id="PS00825">
    <property type="entry name" value="EF1BD_2"/>
    <property type="match status" value="1"/>
</dbReference>
<keyword id="KW-0007">Acetylation</keyword>
<keyword id="KW-0251">Elongation factor</keyword>
<keyword id="KW-0597">Phosphoprotein</keyword>
<keyword id="KW-0648">Protein biosynthesis</keyword>
<keyword id="KW-1185">Reference proteome</keyword>
<sequence>MATNFLMHEKIWFDKFKYDDAERKFYEQMNGPVAGSSRQENGASVILRDIARARENIQKSLAGSSGPGASSGPSGDHSELVTRIASLEVENQSLRGVVQDLQQAVSKLEARLSALEKSSPAHRATTPQTQHVSPMRQVEPPSRKAATATEDDEDDDIDLFGSDEEEDKEATRLREERLRQYAEKKAKKPALVAKSSILLDVKPWDDETDMAQLEACVRSVQLDGLVWGSSKLVPVGYGIRKLQIQCVVEDDKVGTDQLEEEITKFEEHVQSVDIAAFNKI</sequence>
<gene>
    <name type="primary">EEF1D</name>
</gene>